<accession>X1WGV5</accession>
<organism>
    <name type="scientific">Danio rerio</name>
    <name type="common">Zebrafish</name>
    <name type="synonym">Brachydanio rerio</name>
    <dbReference type="NCBI Taxonomy" id="7955"/>
    <lineage>
        <taxon>Eukaryota</taxon>
        <taxon>Metazoa</taxon>
        <taxon>Chordata</taxon>
        <taxon>Craniata</taxon>
        <taxon>Vertebrata</taxon>
        <taxon>Euteleostomi</taxon>
        <taxon>Actinopterygii</taxon>
        <taxon>Neopterygii</taxon>
        <taxon>Teleostei</taxon>
        <taxon>Ostariophysi</taxon>
        <taxon>Cypriniformes</taxon>
        <taxon>Danionidae</taxon>
        <taxon>Danioninae</taxon>
        <taxon>Danio</taxon>
    </lineage>
</organism>
<feature type="chain" id="PRO_0000453674" description="Coiled-coil domain-containing protein 32">
    <location>
        <begin position="1"/>
        <end position="182"/>
    </location>
</feature>
<feature type="region of interest" description="Disordered" evidence="2">
    <location>
        <begin position="1"/>
        <end position="61"/>
    </location>
</feature>
<feature type="region of interest" description="Disordered" evidence="2">
    <location>
        <begin position="153"/>
        <end position="182"/>
    </location>
</feature>
<feature type="compositionally biased region" description="Basic and acidic residues" evidence="2">
    <location>
        <begin position="1"/>
        <end position="10"/>
    </location>
</feature>
<feature type="compositionally biased region" description="Polar residues" evidence="2">
    <location>
        <begin position="153"/>
        <end position="167"/>
    </location>
</feature>
<feature type="compositionally biased region" description="Acidic residues" evidence="2">
    <location>
        <begin position="172"/>
        <end position="182"/>
    </location>
</feature>
<evidence type="ECO:0000250" key="1">
    <source>
        <dbReference type="UniProtKB" id="Q9BV29"/>
    </source>
</evidence>
<evidence type="ECO:0000256" key="2">
    <source>
        <dbReference type="SAM" id="MobiDB-lite"/>
    </source>
</evidence>
<evidence type="ECO:0000269" key="3">
    <source>
    </source>
</evidence>
<evidence type="ECO:0000312" key="4">
    <source>
        <dbReference type="ZFIN" id="ZDB-GENE-131127-581"/>
    </source>
</evidence>
<comment type="function">
    <text evidence="1 3">Regulates clathrin-mediated endocytsois of cargos such as transferrin probably through the association and modulation of adaptor protein complex 2 (AP-2) (By similarity). Has a role in ciliogenesis and is required for proper cephalic and left/right axis development (PubMed:32307552).</text>
</comment>
<comment type="subunit">
    <text evidence="1">Associates with adaptor protein complex 2 (AP-2).</text>
</comment>
<comment type="subcellular location">
    <subcellularLocation>
        <location evidence="1">Membrane</location>
        <location evidence="1">Coated pit</location>
        <topology evidence="1">Peripheral membrane protein</topology>
        <orientation evidence="1">Cytoplasmic side</orientation>
    </subcellularLocation>
</comment>
<comment type="disruption phenotype">
    <text evidence="3">Depletion of ccdc32 using CRISPR-Cas9-mediated gene editing results in disrupted cardiac looping in embryos at 2 dpf, reduced number and length of cilia in Kupffer's vesicle, and in a significant reduction of head size at 3 dpf. Furthermore, ccdc32 crispants exhibit significant alterations in facial skeletal morphology and have hypoplastic cerebella.</text>
</comment>
<proteinExistence type="inferred from homology"/>
<keyword id="KW-0970">Cilium biogenesis/degradation</keyword>
<keyword id="KW-0168">Coated pit</keyword>
<keyword id="KW-0472">Membrane</keyword>
<keyword id="KW-1185">Reference proteome</keyword>
<sequence>MMIDDFETHAARSSGDLWSEVCSSLPEPREQHGGQFTDSFEPSSPGDPHTDSPRAANFSPWEPMADSEVYIAGLENRLKRIKGQTSEVTSREMLRSLSQAKKECWDRFLHDAQTSELFQEGNFDQSALEQFKRWLSPERVAINAEELEYLLLPTQNSETPASSSQTDKPCVEEEEECPSPEK</sequence>
<reference key="1">
    <citation type="journal article" date="2013" name="Nature">
        <title>The zebrafish reference genome sequence and its relationship to the human genome.</title>
        <authorList>
            <person name="Howe K."/>
            <person name="Clark M.D."/>
            <person name="Torroja C.F."/>
            <person name="Torrance J."/>
            <person name="Berthelot C."/>
            <person name="Muffato M."/>
            <person name="Collins J.E."/>
            <person name="Humphray S."/>
            <person name="McLaren K."/>
            <person name="Matthews L."/>
            <person name="McLaren S."/>
            <person name="Sealy I."/>
            <person name="Caccamo M."/>
            <person name="Churcher C."/>
            <person name="Scott C."/>
            <person name="Barrett J.C."/>
            <person name="Koch R."/>
            <person name="Rauch G.J."/>
            <person name="White S."/>
            <person name="Chow W."/>
            <person name="Kilian B."/>
            <person name="Quintais L.T."/>
            <person name="Guerra-Assuncao J.A."/>
            <person name="Zhou Y."/>
            <person name="Gu Y."/>
            <person name="Yen J."/>
            <person name="Vogel J.H."/>
            <person name="Eyre T."/>
            <person name="Redmond S."/>
            <person name="Banerjee R."/>
            <person name="Chi J."/>
            <person name="Fu B."/>
            <person name="Langley E."/>
            <person name="Maguire S.F."/>
            <person name="Laird G.K."/>
            <person name="Lloyd D."/>
            <person name="Kenyon E."/>
            <person name="Donaldson S."/>
            <person name="Sehra H."/>
            <person name="Almeida-King J."/>
            <person name="Loveland J."/>
            <person name="Trevanion S."/>
            <person name="Jones M."/>
            <person name="Quail M."/>
            <person name="Willey D."/>
            <person name="Hunt A."/>
            <person name="Burton J."/>
            <person name="Sims S."/>
            <person name="McLay K."/>
            <person name="Plumb B."/>
            <person name="Davis J."/>
            <person name="Clee C."/>
            <person name="Oliver K."/>
            <person name="Clark R."/>
            <person name="Riddle C."/>
            <person name="Elliot D."/>
            <person name="Threadgold G."/>
            <person name="Harden G."/>
            <person name="Ware D."/>
            <person name="Begum S."/>
            <person name="Mortimore B."/>
            <person name="Kerry G."/>
            <person name="Heath P."/>
            <person name="Phillimore B."/>
            <person name="Tracey A."/>
            <person name="Corby N."/>
            <person name="Dunn M."/>
            <person name="Johnson C."/>
            <person name="Wood J."/>
            <person name="Clark S."/>
            <person name="Pelan S."/>
            <person name="Griffiths G."/>
            <person name="Smith M."/>
            <person name="Glithero R."/>
            <person name="Howden P."/>
            <person name="Barker N."/>
            <person name="Lloyd C."/>
            <person name="Stevens C."/>
            <person name="Harley J."/>
            <person name="Holt K."/>
            <person name="Panagiotidis G."/>
            <person name="Lovell J."/>
            <person name="Beasley H."/>
            <person name="Henderson C."/>
            <person name="Gordon D."/>
            <person name="Auger K."/>
            <person name="Wright D."/>
            <person name="Collins J."/>
            <person name="Raisen C."/>
            <person name="Dyer L."/>
            <person name="Leung K."/>
            <person name="Robertson L."/>
            <person name="Ambridge K."/>
            <person name="Leongamornlert D."/>
            <person name="McGuire S."/>
            <person name="Gilderthorp R."/>
            <person name="Griffiths C."/>
            <person name="Manthravadi D."/>
            <person name="Nichol S."/>
            <person name="Barker G."/>
            <person name="Whitehead S."/>
            <person name="Kay M."/>
            <person name="Brown J."/>
            <person name="Murnane C."/>
            <person name="Gray E."/>
            <person name="Humphries M."/>
            <person name="Sycamore N."/>
            <person name="Barker D."/>
            <person name="Saunders D."/>
            <person name="Wallis J."/>
            <person name="Babbage A."/>
            <person name="Hammond S."/>
            <person name="Mashreghi-Mohammadi M."/>
            <person name="Barr L."/>
            <person name="Martin S."/>
            <person name="Wray P."/>
            <person name="Ellington A."/>
            <person name="Matthews N."/>
            <person name="Ellwood M."/>
            <person name="Woodmansey R."/>
            <person name="Clark G."/>
            <person name="Cooper J."/>
            <person name="Tromans A."/>
            <person name="Grafham D."/>
            <person name="Skuce C."/>
            <person name="Pandian R."/>
            <person name="Andrews R."/>
            <person name="Harrison E."/>
            <person name="Kimberley A."/>
            <person name="Garnett J."/>
            <person name="Fosker N."/>
            <person name="Hall R."/>
            <person name="Garner P."/>
            <person name="Kelly D."/>
            <person name="Bird C."/>
            <person name="Palmer S."/>
            <person name="Gehring I."/>
            <person name="Berger A."/>
            <person name="Dooley C.M."/>
            <person name="Ersan-Urun Z."/>
            <person name="Eser C."/>
            <person name="Geiger H."/>
            <person name="Geisler M."/>
            <person name="Karotki L."/>
            <person name="Kirn A."/>
            <person name="Konantz J."/>
            <person name="Konantz M."/>
            <person name="Oberlander M."/>
            <person name="Rudolph-Geiger S."/>
            <person name="Teucke M."/>
            <person name="Lanz C."/>
            <person name="Raddatz G."/>
            <person name="Osoegawa K."/>
            <person name="Zhu B."/>
            <person name="Rapp A."/>
            <person name="Widaa S."/>
            <person name="Langford C."/>
            <person name="Yang F."/>
            <person name="Schuster S.C."/>
            <person name="Carter N.P."/>
            <person name="Harrow J."/>
            <person name="Ning Z."/>
            <person name="Herrero J."/>
            <person name="Searle S.M."/>
            <person name="Enright A."/>
            <person name="Geisler R."/>
            <person name="Plasterk R.H."/>
            <person name="Lee C."/>
            <person name="Westerfield M."/>
            <person name="de Jong P.J."/>
            <person name="Zon L.I."/>
            <person name="Postlethwait J.H."/>
            <person name="Nusslein-Volhard C."/>
            <person name="Hubbard T.J."/>
            <person name="Roest Crollius H."/>
            <person name="Rogers J."/>
            <person name="Stemple D.L."/>
        </authorList>
    </citation>
    <scope>NUCLEOTIDE SEQUENCE [LARGE SCALE GENOMIC DNA]</scope>
    <source>
        <strain>Tuebingen</strain>
    </source>
</reference>
<reference key="2">
    <citation type="journal article" date="2020" name="Hum. Mol. Genet.">
        <title>Loss of function mutations in CCDC32 cause a congenital syndrome characterized by craniofacial, cardiac and neurodevelopmental anomalies.</title>
        <authorList>
            <person name="Harel T."/>
            <person name="Griffin J.N."/>
            <person name="Arbogast T."/>
            <person name="Monroe T.O."/>
            <person name="Palombo F."/>
            <person name="Martinelli M."/>
            <person name="Seri M."/>
            <person name="Pippucci T."/>
            <person name="Elpeleg O."/>
            <person name="Katsanis N."/>
        </authorList>
    </citation>
    <scope>FUNCTION</scope>
    <scope>DISRUPTION PHENOTYPE</scope>
</reference>
<protein>
    <recommendedName>
        <fullName evidence="4">Coiled-coil domain-containing protein 32</fullName>
    </recommendedName>
</protein>
<gene>
    <name evidence="4" type="primary">ccdc32</name>
</gene>
<name>CCD32_DANRE</name>
<dbReference type="EMBL" id="BX649281">
    <property type="status" value="NOT_ANNOTATED_CDS"/>
    <property type="molecule type" value="Genomic_DNA"/>
</dbReference>
<dbReference type="RefSeq" id="NP_001185682.1">
    <property type="nucleotide sequence ID" value="NM_001198753.1"/>
</dbReference>
<dbReference type="FunCoup" id="X1WGV5">
    <property type="interactions" value="676"/>
</dbReference>
<dbReference type="STRING" id="7955.ENSDARP00000129464"/>
<dbReference type="PaxDb" id="7955-ENSDARP00000102439"/>
<dbReference type="Ensembl" id="ENSDART00000155580">
    <property type="protein sequence ID" value="ENSDARP00000129464"/>
    <property type="gene ID" value="ENSDARG00000073962"/>
</dbReference>
<dbReference type="GeneID" id="564862"/>
<dbReference type="KEGG" id="dre:564862"/>
<dbReference type="AGR" id="ZFIN:ZDB-GENE-131127-581"/>
<dbReference type="CTD" id="90416"/>
<dbReference type="ZFIN" id="ZDB-GENE-131127-581">
    <property type="gene designation" value="ccdc32"/>
</dbReference>
<dbReference type="eggNOG" id="KOG4106">
    <property type="taxonomic scope" value="Eukaryota"/>
</dbReference>
<dbReference type="HOGENOM" id="CLU_119111_0_0_1"/>
<dbReference type="InParanoid" id="X1WGV5"/>
<dbReference type="OMA" id="YVEGHES"/>
<dbReference type="OrthoDB" id="5982503at2759"/>
<dbReference type="PRO" id="PR:X1WGV5"/>
<dbReference type="Proteomes" id="UP000000437">
    <property type="component" value="Alternate scaffold 17"/>
</dbReference>
<dbReference type="Proteomes" id="UP000000437">
    <property type="component" value="Chromosome 17"/>
</dbReference>
<dbReference type="Bgee" id="ENSDARG00000073962">
    <property type="expression patterns" value="Expressed in brain and 21 other cell types or tissues"/>
</dbReference>
<dbReference type="GO" id="GO:0005905">
    <property type="term" value="C:clathrin-coated pit"/>
    <property type="evidence" value="ECO:0000250"/>
    <property type="project" value="UniProtKB"/>
</dbReference>
<dbReference type="GO" id="GO:0044782">
    <property type="term" value="P:cilium organization"/>
    <property type="evidence" value="ECO:0000315"/>
    <property type="project" value="UniProtKB"/>
</dbReference>
<dbReference type="GO" id="GO:0060322">
    <property type="term" value="P:head development"/>
    <property type="evidence" value="ECO:0000315"/>
    <property type="project" value="UniProtKB"/>
</dbReference>
<dbReference type="GO" id="GO:2000369">
    <property type="term" value="P:regulation of clathrin-dependent endocytosis"/>
    <property type="evidence" value="ECO:0000250"/>
    <property type="project" value="UniProtKB"/>
</dbReference>
<dbReference type="InterPro" id="IPR028039">
    <property type="entry name" value="CCDC32"/>
</dbReference>
<dbReference type="PANTHER" id="PTHR31800">
    <property type="entry name" value="COILED-COIL DOMAIN-CONTAINING PROTEIN 32"/>
    <property type="match status" value="1"/>
</dbReference>
<dbReference type="PANTHER" id="PTHR31800:SF1">
    <property type="entry name" value="COILED-COIL DOMAIN-CONTAINING PROTEIN 32"/>
    <property type="match status" value="1"/>
</dbReference>
<dbReference type="Pfam" id="PF14989">
    <property type="entry name" value="CCDC32"/>
    <property type="match status" value="1"/>
</dbReference>